<gene>
    <name type="primary">MT-CYB</name>
    <name type="synonym">COB</name>
    <name type="synonym">CYTB</name>
    <name type="synonym">MTCYB</name>
</gene>
<sequence length="370" mass="42234">MPHQQILMLFGLLPVATNISTWWNFGSMLLACLTLQLLTGFFLAVHYTANINLAFSSIIHITRDVPYGWMMQNLHAIGASMFFICIYIHIARGLYYGSYLNKETWFSGTTLLIMLMATAFFGYVLPWGQMSFWAATVITNLLTAIPYLGSTMTTWLWGGFAINDPTLTRFFALHFILPFGIISLSSLHILLLHEEGSSNPLGTNSDIDKIPFHPYQTYKDMLMLTIMTIMLLTIVSFFPDIFNDPDSFSKANPLVTPQHIKPEWYFLFXYGILRSIPNKLGGALALTMSIMMLLTLPFTHTSKLRSMMFRPFMQLTFWTFTATFLVISWTATKPVEPPFTTISQVAALMYFLFFISNPIMGWLENKIMKL</sequence>
<comment type="function">
    <text evidence="2">Component of the ubiquinol-cytochrome c reductase complex (complex III or cytochrome b-c1 complex) that is part of the mitochondrial respiratory chain. The b-c1 complex mediates electron transfer from ubiquinol to cytochrome c. Contributes to the generation of a proton gradient across the mitochondrial membrane that is then used for ATP synthesis.</text>
</comment>
<comment type="cofactor">
    <cofactor evidence="2">
        <name>heme b</name>
        <dbReference type="ChEBI" id="CHEBI:60344"/>
    </cofactor>
    <text evidence="2">Binds 2 heme b groups non-covalently.</text>
</comment>
<comment type="subunit">
    <text evidence="2">The cytochrome bc1 complex contains 3 respiratory subunits (MT-CYB, CYC1 and UQCRFS1), 2 core proteins (UQCRC1 and UQCRC2) and probably 6 low-molecular weight proteins.</text>
</comment>
<comment type="subcellular location">
    <subcellularLocation>
        <location evidence="2">Mitochondrion inner membrane</location>
        <topology evidence="2">Multi-pass membrane protein</topology>
    </subcellularLocation>
</comment>
<comment type="miscellaneous">
    <text evidence="1">Heme 1 (or BL or b562) is low-potential and absorbs at about 562 nm, and heme 2 (or BH or b566) is high-potential and absorbs at about 566 nm.</text>
</comment>
<comment type="similarity">
    <text evidence="3 4">Belongs to the cytochrome b family.</text>
</comment>
<comment type="caution">
    <text evidence="2">The full-length protein contains only eight transmembrane helices, not nine as predicted by bioinformatics tools.</text>
</comment>
<protein>
    <recommendedName>
        <fullName>Cytochrome b</fullName>
    </recommendedName>
    <alternativeName>
        <fullName>Complex III subunit 3</fullName>
    </alternativeName>
    <alternativeName>
        <fullName>Complex III subunit III</fullName>
    </alternativeName>
    <alternativeName>
        <fullName>Cytochrome b-c1 complex subunit 3</fullName>
    </alternativeName>
    <alternativeName>
        <fullName>Ubiquinol-cytochrome-c reductase complex cytochrome b subunit</fullName>
    </alternativeName>
</protein>
<keyword id="KW-0249">Electron transport</keyword>
<keyword id="KW-0349">Heme</keyword>
<keyword id="KW-0408">Iron</keyword>
<keyword id="KW-0472">Membrane</keyword>
<keyword id="KW-0479">Metal-binding</keyword>
<keyword id="KW-0496">Mitochondrion</keyword>
<keyword id="KW-0999">Mitochondrion inner membrane</keyword>
<keyword id="KW-0679">Respiratory chain</keyword>
<keyword id="KW-0812">Transmembrane</keyword>
<keyword id="KW-1133">Transmembrane helix</keyword>
<keyword id="KW-0813">Transport</keyword>
<keyword id="KW-0830">Ubiquinone</keyword>
<accession>O48055</accession>
<feature type="chain" id="PRO_0000060929" description="Cytochrome b">
    <location>
        <begin position="1"/>
        <end position="370"/>
    </location>
</feature>
<feature type="transmembrane region" description="Helical" evidence="2">
    <location>
        <begin position="25"/>
        <end position="45"/>
    </location>
</feature>
<feature type="transmembrane region" description="Helical" evidence="2">
    <location>
        <begin position="69"/>
        <end position="90"/>
    </location>
</feature>
<feature type="transmembrane region" description="Helical" evidence="2">
    <location>
        <begin position="105"/>
        <end position="125"/>
    </location>
</feature>
<feature type="transmembrane region" description="Helical" evidence="2">
    <location>
        <begin position="170"/>
        <end position="190"/>
    </location>
</feature>
<feature type="transmembrane region" description="Helical" evidence="2">
    <location>
        <begin position="218"/>
        <end position="238"/>
    </location>
</feature>
<feature type="transmembrane region" description="Helical" evidence="2">
    <location>
        <begin position="280"/>
        <end position="300"/>
    </location>
</feature>
<feature type="transmembrane region" description="Helical" evidence="2">
    <location>
        <begin position="312"/>
        <end position="332"/>
    </location>
</feature>
<feature type="transmembrane region" description="Helical" evidence="2">
    <location>
        <begin position="339"/>
        <end position="358"/>
    </location>
</feature>
<feature type="binding site" description="axial binding residue" evidence="2">
    <location>
        <position position="75"/>
    </location>
    <ligand>
        <name>heme b</name>
        <dbReference type="ChEBI" id="CHEBI:60344"/>
        <label>b562</label>
    </ligand>
    <ligandPart>
        <name>Fe</name>
        <dbReference type="ChEBI" id="CHEBI:18248"/>
    </ligandPart>
</feature>
<feature type="binding site" description="axial binding residue" evidence="2">
    <location>
        <position position="89"/>
    </location>
    <ligand>
        <name>heme b</name>
        <dbReference type="ChEBI" id="CHEBI:60344"/>
        <label>b566</label>
    </ligand>
    <ligandPart>
        <name>Fe</name>
        <dbReference type="ChEBI" id="CHEBI:18248"/>
    </ligandPart>
</feature>
<feature type="binding site" description="axial binding residue" evidence="2">
    <location>
        <position position="174"/>
    </location>
    <ligand>
        <name>heme b</name>
        <dbReference type="ChEBI" id="CHEBI:60344"/>
        <label>b562</label>
    </ligand>
    <ligandPart>
        <name>Fe</name>
        <dbReference type="ChEBI" id="CHEBI:18248"/>
    </ligandPart>
</feature>
<feature type="binding site" description="axial binding residue" evidence="2">
    <location>
        <position position="188"/>
    </location>
    <ligand>
        <name>heme b</name>
        <dbReference type="ChEBI" id="CHEBI:60344"/>
        <label>b566</label>
    </ligand>
    <ligandPart>
        <name>Fe</name>
        <dbReference type="ChEBI" id="CHEBI:18248"/>
    </ligandPart>
</feature>
<feature type="binding site" evidence="2">
    <location>
        <position position="193"/>
    </location>
    <ligand>
        <name>a ubiquinone</name>
        <dbReference type="ChEBI" id="CHEBI:16389"/>
    </ligand>
</feature>
<geneLocation type="mitochondrion"/>
<proteinExistence type="inferred from homology"/>
<name>CYB_CHISM</name>
<reference key="1">
    <citation type="thesis" date="1997" institute="Queen's University / Kingston" country="Canada">
        <title>Hic Sunt Serpentes -- molecular phylogenetics and the Boidae (Serpentes: Booidea).</title>
        <authorList>
            <person name="Campbell B.N."/>
        </authorList>
    </citation>
    <scope>NUCLEOTIDE SEQUENCE [GENOMIC DNA]</scope>
</reference>
<evidence type="ECO:0000250" key="1"/>
<evidence type="ECO:0000250" key="2">
    <source>
        <dbReference type="UniProtKB" id="P00157"/>
    </source>
</evidence>
<evidence type="ECO:0000255" key="3">
    <source>
        <dbReference type="PROSITE-ProRule" id="PRU00967"/>
    </source>
</evidence>
<evidence type="ECO:0000255" key="4">
    <source>
        <dbReference type="PROSITE-ProRule" id="PRU00968"/>
    </source>
</evidence>
<organism>
    <name type="scientific">Chilabothrus strigilatus mccraniei</name>
    <name type="common">Ragged Island boa constrictor</name>
    <name type="synonym">Epicrates strigilatus mccraniei</name>
    <dbReference type="NCBI Taxonomy" id="51739"/>
    <lineage>
        <taxon>Eukaryota</taxon>
        <taxon>Metazoa</taxon>
        <taxon>Chordata</taxon>
        <taxon>Craniata</taxon>
        <taxon>Vertebrata</taxon>
        <taxon>Euteleostomi</taxon>
        <taxon>Lepidosauria</taxon>
        <taxon>Squamata</taxon>
        <taxon>Bifurcata</taxon>
        <taxon>Unidentata</taxon>
        <taxon>Episquamata</taxon>
        <taxon>Toxicofera</taxon>
        <taxon>Serpentes</taxon>
        <taxon>Henophidia</taxon>
        <taxon>Boidae</taxon>
        <taxon>Boinae</taxon>
        <taxon>Chilabothrus</taxon>
    </lineage>
</organism>
<dbReference type="EMBL" id="U69793">
    <property type="protein sequence ID" value="AAC01846.1"/>
    <property type="molecule type" value="Genomic_DNA"/>
</dbReference>
<dbReference type="GO" id="GO:0005743">
    <property type="term" value="C:mitochondrial inner membrane"/>
    <property type="evidence" value="ECO:0007669"/>
    <property type="project" value="UniProtKB-SubCell"/>
</dbReference>
<dbReference type="GO" id="GO:0045275">
    <property type="term" value="C:respiratory chain complex III"/>
    <property type="evidence" value="ECO:0007669"/>
    <property type="project" value="InterPro"/>
</dbReference>
<dbReference type="GO" id="GO:0046872">
    <property type="term" value="F:metal ion binding"/>
    <property type="evidence" value="ECO:0007669"/>
    <property type="project" value="UniProtKB-KW"/>
</dbReference>
<dbReference type="GO" id="GO:0008121">
    <property type="term" value="F:ubiquinol-cytochrome-c reductase activity"/>
    <property type="evidence" value="ECO:0007669"/>
    <property type="project" value="InterPro"/>
</dbReference>
<dbReference type="GO" id="GO:0006122">
    <property type="term" value="P:mitochondrial electron transport, ubiquinol to cytochrome c"/>
    <property type="evidence" value="ECO:0007669"/>
    <property type="project" value="TreeGrafter"/>
</dbReference>
<dbReference type="CDD" id="cd00290">
    <property type="entry name" value="cytochrome_b_C"/>
    <property type="match status" value="1"/>
</dbReference>
<dbReference type="CDD" id="cd00284">
    <property type="entry name" value="Cytochrome_b_N"/>
    <property type="match status" value="1"/>
</dbReference>
<dbReference type="Gene3D" id="1.20.810.10">
    <property type="entry name" value="Cytochrome Bc1 Complex, Chain C"/>
    <property type="match status" value="1"/>
</dbReference>
<dbReference type="InterPro" id="IPR005798">
    <property type="entry name" value="Cyt_b/b6_C"/>
</dbReference>
<dbReference type="InterPro" id="IPR036150">
    <property type="entry name" value="Cyt_b/b6_C_sf"/>
</dbReference>
<dbReference type="InterPro" id="IPR005797">
    <property type="entry name" value="Cyt_b/b6_N"/>
</dbReference>
<dbReference type="InterPro" id="IPR027387">
    <property type="entry name" value="Cytb/b6-like_sf"/>
</dbReference>
<dbReference type="InterPro" id="IPR030689">
    <property type="entry name" value="Cytochrome_b"/>
</dbReference>
<dbReference type="InterPro" id="IPR048260">
    <property type="entry name" value="Cytochrome_b_C_euk/bac"/>
</dbReference>
<dbReference type="InterPro" id="IPR048259">
    <property type="entry name" value="Cytochrome_b_N_euk/bac"/>
</dbReference>
<dbReference type="InterPro" id="IPR016174">
    <property type="entry name" value="Di-haem_cyt_TM"/>
</dbReference>
<dbReference type="PANTHER" id="PTHR19271">
    <property type="entry name" value="CYTOCHROME B"/>
    <property type="match status" value="1"/>
</dbReference>
<dbReference type="PANTHER" id="PTHR19271:SF16">
    <property type="entry name" value="CYTOCHROME B"/>
    <property type="match status" value="1"/>
</dbReference>
<dbReference type="Pfam" id="PF00032">
    <property type="entry name" value="Cytochrom_B_C"/>
    <property type="match status" value="1"/>
</dbReference>
<dbReference type="Pfam" id="PF00033">
    <property type="entry name" value="Cytochrome_B"/>
    <property type="match status" value="1"/>
</dbReference>
<dbReference type="PIRSF" id="PIRSF038885">
    <property type="entry name" value="COB"/>
    <property type="match status" value="1"/>
</dbReference>
<dbReference type="SUPFAM" id="SSF81648">
    <property type="entry name" value="a domain/subunit of cytochrome bc1 complex (Ubiquinol-cytochrome c reductase)"/>
    <property type="match status" value="1"/>
</dbReference>
<dbReference type="SUPFAM" id="SSF81342">
    <property type="entry name" value="Transmembrane di-heme cytochromes"/>
    <property type="match status" value="1"/>
</dbReference>
<dbReference type="PROSITE" id="PS51003">
    <property type="entry name" value="CYTB_CTER"/>
    <property type="match status" value="1"/>
</dbReference>
<dbReference type="PROSITE" id="PS51002">
    <property type="entry name" value="CYTB_NTER"/>
    <property type="match status" value="1"/>
</dbReference>